<accession>C0PY46</accession>
<gene>
    <name evidence="1" type="primary">epd</name>
    <name type="ordered locus">SPC_3133</name>
</gene>
<keyword id="KW-0963">Cytoplasm</keyword>
<keyword id="KW-0520">NAD</keyword>
<keyword id="KW-0560">Oxidoreductase</keyword>
<keyword id="KW-0664">Pyridoxine biosynthesis</keyword>
<sequence>MTVRIAINGFGRIGRNVVRALYESGRRAEITVVAINELADAAGMAHLLKYDTSHGRFAWEVRHEREQLFVGDDVIRILHERTLADLPWRELGVDVVLDCTGVYGNREHGEAHIAAGAKKVLFSHPGSNDLDATVVFGVNQNQLRAEHRIVSNASCTTNCIIPVIKLLDDAYGIESGTVTTIHSAMNDQQVIDAYHSDLRRTRAASQSIIPVDTKLAAGITRIFPQFNDRFEAIAVRVPTINVTAIDLSVTVKKPVKASEVNQLLQKAAQGAFHGIVDYTESPLVSIDFNHDPHSAIVDGTQTRVSGAHLIKTLVWCDNEWGFANRMLDTTLAMAAVGFRLDASASTKL</sequence>
<dbReference type="EC" id="1.2.1.72" evidence="1"/>
<dbReference type="EMBL" id="CP000857">
    <property type="protein sequence ID" value="ACN47220.1"/>
    <property type="molecule type" value="Genomic_DNA"/>
</dbReference>
<dbReference type="RefSeq" id="WP_000218338.1">
    <property type="nucleotide sequence ID" value="NC_012125.1"/>
</dbReference>
<dbReference type="SMR" id="C0PY46"/>
<dbReference type="KEGG" id="sei:SPC_3133"/>
<dbReference type="HOGENOM" id="CLU_030140_0_0_6"/>
<dbReference type="UniPathway" id="UPA00244">
    <property type="reaction ID" value="UER00309"/>
</dbReference>
<dbReference type="Proteomes" id="UP000001599">
    <property type="component" value="Chromosome"/>
</dbReference>
<dbReference type="GO" id="GO:0005737">
    <property type="term" value="C:cytoplasm"/>
    <property type="evidence" value="ECO:0007669"/>
    <property type="project" value="UniProtKB-SubCell"/>
</dbReference>
<dbReference type="GO" id="GO:0048001">
    <property type="term" value="F:erythrose-4-phosphate dehydrogenase activity"/>
    <property type="evidence" value="ECO:0007669"/>
    <property type="project" value="UniProtKB-UniRule"/>
</dbReference>
<dbReference type="GO" id="GO:0051287">
    <property type="term" value="F:NAD binding"/>
    <property type="evidence" value="ECO:0007669"/>
    <property type="project" value="InterPro"/>
</dbReference>
<dbReference type="GO" id="GO:0050661">
    <property type="term" value="F:NADP binding"/>
    <property type="evidence" value="ECO:0007669"/>
    <property type="project" value="InterPro"/>
</dbReference>
<dbReference type="GO" id="GO:0006006">
    <property type="term" value="P:glucose metabolic process"/>
    <property type="evidence" value="ECO:0007669"/>
    <property type="project" value="InterPro"/>
</dbReference>
<dbReference type="GO" id="GO:0042823">
    <property type="term" value="P:pyridoxal phosphate biosynthetic process"/>
    <property type="evidence" value="ECO:0007669"/>
    <property type="project" value="UniProtKB-UniRule"/>
</dbReference>
<dbReference type="GO" id="GO:0008615">
    <property type="term" value="P:pyridoxine biosynthetic process"/>
    <property type="evidence" value="ECO:0007669"/>
    <property type="project" value="UniProtKB-UniRule"/>
</dbReference>
<dbReference type="CDD" id="cd23937">
    <property type="entry name" value="GAPDH_C_E4PDH"/>
    <property type="match status" value="1"/>
</dbReference>
<dbReference type="CDD" id="cd17892">
    <property type="entry name" value="GAPDH_N_E4PDH"/>
    <property type="match status" value="1"/>
</dbReference>
<dbReference type="FunFam" id="3.30.360.10:FF:000007">
    <property type="entry name" value="D-erythrose-4-phosphate dehydrogenase"/>
    <property type="match status" value="1"/>
</dbReference>
<dbReference type="FunFam" id="3.40.50.720:FF:000001">
    <property type="entry name" value="Glyceraldehyde-3-phosphate dehydrogenase"/>
    <property type="match status" value="1"/>
</dbReference>
<dbReference type="Gene3D" id="3.30.360.10">
    <property type="entry name" value="Dihydrodipicolinate Reductase, domain 2"/>
    <property type="match status" value="1"/>
</dbReference>
<dbReference type="Gene3D" id="3.40.50.720">
    <property type="entry name" value="NAD(P)-binding Rossmann-like Domain"/>
    <property type="match status" value="1"/>
</dbReference>
<dbReference type="HAMAP" id="MF_01640">
    <property type="entry name" value="E4P_dehydrog"/>
    <property type="match status" value="1"/>
</dbReference>
<dbReference type="InterPro" id="IPR006422">
    <property type="entry name" value="E4P_DH_bac"/>
</dbReference>
<dbReference type="InterPro" id="IPR020831">
    <property type="entry name" value="GlycerAld/Erythrose_P_DH"/>
</dbReference>
<dbReference type="InterPro" id="IPR020830">
    <property type="entry name" value="GlycerAld_3-P_DH_AS"/>
</dbReference>
<dbReference type="InterPro" id="IPR020829">
    <property type="entry name" value="GlycerAld_3-P_DH_cat"/>
</dbReference>
<dbReference type="InterPro" id="IPR020828">
    <property type="entry name" value="GlycerAld_3-P_DH_NAD(P)-bd"/>
</dbReference>
<dbReference type="InterPro" id="IPR006424">
    <property type="entry name" value="Glyceraldehyde-3-P_DH_1"/>
</dbReference>
<dbReference type="InterPro" id="IPR036291">
    <property type="entry name" value="NAD(P)-bd_dom_sf"/>
</dbReference>
<dbReference type="NCBIfam" id="TIGR01532">
    <property type="entry name" value="E4PD_g-proteo"/>
    <property type="match status" value="1"/>
</dbReference>
<dbReference type="NCBIfam" id="TIGR01534">
    <property type="entry name" value="GAPDH-I"/>
    <property type="match status" value="1"/>
</dbReference>
<dbReference type="NCBIfam" id="NF010058">
    <property type="entry name" value="PRK13535.1"/>
    <property type="match status" value="1"/>
</dbReference>
<dbReference type="PANTHER" id="PTHR43148">
    <property type="entry name" value="GLYCERALDEHYDE-3-PHOSPHATE DEHYDROGENASE 2"/>
    <property type="match status" value="1"/>
</dbReference>
<dbReference type="Pfam" id="PF02800">
    <property type="entry name" value="Gp_dh_C"/>
    <property type="match status" value="1"/>
</dbReference>
<dbReference type="Pfam" id="PF00044">
    <property type="entry name" value="Gp_dh_N"/>
    <property type="match status" value="1"/>
</dbReference>
<dbReference type="PIRSF" id="PIRSF000149">
    <property type="entry name" value="GAP_DH"/>
    <property type="match status" value="1"/>
</dbReference>
<dbReference type="PRINTS" id="PR00078">
    <property type="entry name" value="G3PDHDRGNASE"/>
</dbReference>
<dbReference type="SMART" id="SM00846">
    <property type="entry name" value="Gp_dh_N"/>
    <property type="match status" value="1"/>
</dbReference>
<dbReference type="SUPFAM" id="SSF55347">
    <property type="entry name" value="Glyceraldehyde-3-phosphate dehydrogenase-like, C-terminal domain"/>
    <property type="match status" value="1"/>
</dbReference>
<dbReference type="SUPFAM" id="SSF51735">
    <property type="entry name" value="NAD(P)-binding Rossmann-fold domains"/>
    <property type="match status" value="1"/>
</dbReference>
<dbReference type="PROSITE" id="PS00071">
    <property type="entry name" value="GAPDH"/>
    <property type="match status" value="1"/>
</dbReference>
<comment type="function">
    <text evidence="1">Catalyzes the NAD-dependent conversion of D-erythrose 4-phosphate to 4-phosphoerythronate.</text>
</comment>
<comment type="catalytic activity">
    <reaction evidence="1">
        <text>D-erythrose 4-phosphate + NAD(+) + H2O = 4-phospho-D-erythronate + NADH + 2 H(+)</text>
        <dbReference type="Rhea" id="RHEA:12056"/>
        <dbReference type="ChEBI" id="CHEBI:15377"/>
        <dbReference type="ChEBI" id="CHEBI:15378"/>
        <dbReference type="ChEBI" id="CHEBI:16897"/>
        <dbReference type="ChEBI" id="CHEBI:57540"/>
        <dbReference type="ChEBI" id="CHEBI:57945"/>
        <dbReference type="ChEBI" id="CHEBI:58766"/>
        <dbReference type="EC" id="1.2.1.72"/>
    </reaction>
</comment>
<comment type="pathway">
    <text evidence="1">Cofactor biosynthesis; pyridoxine 5'-phosphate biosynthesis; pyridoxine 5'-phosphate from D-erythrose 4-phosphate: step 1/5.</text>
</comment>
<comment type="subunit">
    <text evidence="1">Homotetramer.</text>
</comment>
<comment type="subcellular location">
    <subcellularLocation>
        <location evidence="1">Cytoplasm</location>
    </subcellularLocation>
</comment>
<comment type="similarity">
    <text evidence="1">Belongs to the glyceraldehyde-3-phosphate dehydrogenase family. Epd subfamily.</text>
</comment>
<feature type="chain" id="PRO_1000186838" description="D-erythrose-4-phosphate dehydrogenase">
    <location>
        <begin position="1"/>
        <end position="348"/>
    </location>
</feature>
<feature type="active site" description="Nucleophile" evidence="1">
    <location>
        <position position="155"/>
    </location>
</feature>
<feature type="binding site" evidence="1">
    <location>
        <begin position="12"/>
        <end position="13"/>
    </location>
    <ligand>
        <name>NAD(+)</name>
        <dbReference type="ChEBI" id="CHEBI:57540"/>
    </ligand>
</feature>
<feature type="binding site" evidence="1">
    <location>
        <position position="81"/>
    </location>
    <ligand>
        <name>NAD(+)</name>
        <dbReference type="ChEBI" id="CHEBI:57540"/>
    </ligand>
</feature>
<feature type="binding site" evidence="1">
    <location>
        <begin position="154"/>
        <end position="156"/>
    </location>
    <ligand>
        <name>substrate</name>
    </ligand>
</feature>
<feature type="binding site" evidence="1">
    <location>
        <position position="200"/>
    </location>
    <ligand>
        <name>substrate</name>
    </ligand>
</feature>
<feature type="binding site" evidence="1">
    <location>
        <begin position="213"/>
        <end position="214"/>
    </location>
    <ligand>
        <name>substrate</name>
    </ligand>
</feature>
<feature type="binding site" evidence="1">
    <location>
        <position position="236"/>
    </location>
    <ligand>
        <name>substrate</name>
    </ligand>
</feature>
<feature type="binding site" evidence="1">
    <location>
        <position position="318"/>
    </location>
    <ligand>
        <name>NAD(+)</name>
        <dbReference type="ChEBI" id="CHEBI:57540"/>
    </ligand>
</feature>
<feature type="site" description="Activates thiol group during catalysis" evidence="1">
    <location>
        <position position="182"/>
    </location>
</feature>
<reference key="1">
    <citation type="journal article" date="2009" name="PLoS ONE">
        <title>Salmonella paratyphi C: genetic divergence from Salmonella choleraesuis and pathogenic convergence with Salmonella typhi.</title>
        <authorList>
            <person name="Liu W.-Q."/>
            <person name="Feng Y."/>
            <person name="Wang Y."/>
            <person name="Zou Q.-H."/>
            <person name="Chen F."/>
            <person name="Guo J.-T."/>
            <person name="Peng Y.-H."/>
            <person name="Jin Y."/>
            <person name="Li Y.-G."/>
            <person name="Hu S.-N."/>
            <person name="Johnston R.N."/>
            <person name="Liu G.-R."/>
            <person name="Liu S.-L."/>
        </authorList>
    </citation>
    <scope>NUCLEOTIDE SEQUENCE [LARGE SCALE GENOMIC DNA]</scope>
    <source>
        <strain>RKS4594</strain>
    </source>
</reference>
<proteinExistence type="inferred from homology"/>
<organism>
    <name type="scientific">Salmonella paratyphi C (strain RKS4594)</name>
    <dbReference type="NCBI Taxonomy" id="476213"/>
    <lineage>
        <taxon>Bacteria</taxon>
        <taxon>Pseudomonadati</taxon>
        <taxon>Pseudomonadota</taxon>
        <taxon>Gammaproteobacteria</taxon>
        <taxon>Enterobacterales</taxon>
        <taxon>Enterobacteriaceae</taxon>
        <taxon>Salmonella</taxon>
    </lineage>
</organism>
<name>E4PD_SALPC</name>
<protein>
    <recommendedName>
        <fullName evidence="1">D-erythrose-4-phosphate dehydrogenase</fullName>
        <shortName evidence="1">E4PDH</shortName>
        <ecNumber evidence="1">1.2.1.72</ecNumber>
    </recommendedName>
</protein>
<evidence type="ECO:0000255" key="1">
    <source>
        <dbReference type="HAMAP-Rule" id="MF_01640"/>
    </source>
</evidence>